<comment type="similarity">
    <text evidence="2">Belongs to the eukaryotic ribosomal protein eS26 family.</text>
</comment>
<keyword id="KW-1185">Reference proteome</keyword>
<keyword id="KW-0687">Ribonucleoprotein</keyword>
<keyword id="KW-0689">Ribosomal protein</keyword>
<reference key="1">
    <citation type="journal article" date="2005" name="Nature">
        <title>The genome of the social amoeba Dictyostelium discoideum.</title>
        <authorList>
            <person name="Eichinger L."/>
            <person name="Pachebat J.A."/>
            <person name="Gloeckner G."/>
            <person name="Rajandream M.A."/>
            <person name="Sucgang R."/>
            <person name="Berriman M."/>
            <person name="Song J."/>
            <person name="Olsen R."/>
            <person name="Szafranski K."/>
            <person name="Xu Q."/>
            <person name="Tunggal B."/>
            <person name="Kummerfeld S."/>
            <person name="Madera M."/>
            <person name="Konfortov B.A."/>
            <person name="Rivero F."/>
            <person name="Bankier A.T."/>
            <person name="Lehmann R."/>
            <person name="Hamlin N."/>
            <person name="Davies R."/>
            <person name="Gaudet P."/>
            <person name="Fey P."/>
            <person name="Pilcher K."/>
            <person name="Chen G."/>
            <person name="Saunders D."/>
            <person name="Sodergren E.J."/>
            <person name="Davis P."/>
            <person name="Kerhornou A."/>
            <person name="Nie X."/>
            <person name="Hall N."/>
            <person name="Anjard C."/>
            <person name="Hemphill L."/>
            <person name="Bason N."/>
            <person name="Farbrother P."/>
            <person name="Desany B."/>
            <person name="Just E."/>
            <person name="Morio T."/>
            <person name="Rost R."/>
            <person name="Churcher C.M."/>
            <person name="Cooper J."/>
            <person name="Haydock S."/>
            <person name="van Driessche N."/>
            <person name="Cronin A."/>
            <person name="Goodhead I."/>
            <person name="Muzny D.M."/>
            <person name="Mourier T."/>
            <person name="Pain A."/>
            <person name="Lu M."/>
            <person name="Harper D."/>
            <person name="Lindsay R."/>
            <person name="Hauser H."/>
            <person name="James K.D."/>
            <person name="Quiles M."/>
            <person name="Madan Babu M."/>
            <person name="Saito T."/>
            <person name="Buchrieser C."/>
            <person name="Wardroper A."/>
            <person name="Felder M."/>
            <person name="Thangavelu M."/>
            <person name="Johnson D."/>
            <person name="Knights A."/>
            <person name="Loulseged H."/>
            <person name="Mungall K.L."/>
            <person name="Oliver K."/>
            <person name="Price C."/>
            <person name="Quail M.A."/>
            <person name="Urushihara H."/>
            <person name="Hernandez J."/>
            <person name="Rabbinowitsch E."/>
            <person name="Steffen D."/>
            <person name="Sanders M."/>
            <person name="Ma J."/>
            <person name="Kohara Y."/>
            <person name="Sharp S."/>
            <person name="Simmonds M.N."/>
            <person name="Spiegler S."/>
            <person name="Tivey A."/>
            <person name="Sugano S."/>
            <person name="White B."/>
            <person name="Walker D."/>
            <person name="Woodward J.R."/>
            <person name="Winckler T."/>
            <person name="Tanaka Y."/>
            <person name="Shaulsky G."/>
            <person name="Schleicher M."/>
            <person name="Weinstock G.M."/>
            <person name="Rosenthal A."/>
            <person name="Cox E.C."/>
            <person name="Chisholm R.L."/>
            <person name="Gibbs R.A."/>
            <person name="Loomis W.F."/>
            <person name="Platzer M."/>
            <person name="Kay R.R."/>
            <person name="Williams J.G."/>
            <person name="Dear P.H."/>
            <person name="Noegel A.A."/>
            <person name="Barrell B.G."/>
            <person name="Kuspa A."/>
        </authorList>
    </citation>
    <scope>NUCLEOTIDE SEQUENCE [LARGE SCALE GENOMIC DNA]</scope>
    <source>
        <strain>AX4</strain>
    </source>
</reference>
<sequence length="112" mass="12798">MTQKRRNHGRSKHGRGSVPYIRCTNCARCVPKDKAVKRFYIRPIVENAAVKDISDQGVFNVKGYKFPRTYVKSQYCISCAIHSHIVRVRSVADRKIRTRPSRPGVKKPTAAK</sequence>
<proteinExistence type="inferred from homology"/>
<protein>
    <recommendedName>
        <fullName evidence="2">Small ribosomal subunit protein eS26</fullName>
    </recommendedName>
    <alternativeName>
        <fullName>40S ribosomal protein S26</fullName>
    </alternativeName>
</protein>
<name>RS26_DICDI</name>
<feature type="chain" id="PRO_0000319550" description="Small ribosomal subunit protein eS26">
    <location>
        <begin position="1"/>
        <end position="112"/>
    </location>
</feature>
<feature type="region of interest" description="Disordered" evidence="1">
    <location>
        <begin position="93"/>
        <end position="112"/>
    </location>
</feature>
<dbReference type="EMBL" id="AAFI02000042">
    <property type="protein sequence ID" value="EAL66600.1"/>
    <property type="molecule type" value="Genomic_DNA"/>
</dbReference>
<dbReference type="RefSeq" id="XP_640573.1">
    <property type="nucleotide sequence ID" value="XM_635481.1"/>
</dbReference>
<dbReference type="SMR" id="Q54TL8"/>
<dbReference type="FunCoup" id="Q54TL8">
    <property type="interactions" value="491"/>
</dbReference>
<dbReference type="STRING" id="44689.Q54TL8"/>
<dbReference type="PaxDb" id="44689-DDB0231064"/>
<dbReference type="EnsemblProtists" id="EAL66600">
    <property type="protein sequence ID" value="EAL66600"/>
    <property type="gene ID" value="DDB_G0281677"/>
</dbReference>
<dbReference type="GeneID" id="8623182"/>
<dbReference type="KEGG" id="ddi:DDB_G0281677"/>
<dbReference type="dictyBase" id="DDB_G0281677">
    <property type="gene designation" value="rps26"/>
</dbReference>
<dbReference type="VEuPathDB" id="AmoebaDB:DDB_G0281677"/>
<dbReference type="eggNOG" id="KOG1768">
    <property type="taxonomic scope" value="Eukaryota"/>
</dbReference>
<dbReference type="HOGENOM" id="CLU_129451_0_1_1"/>
<dbReference type="InParanoid" id="Q54TL8"/>
<dbReference type="OMA" id="KCYCVSC"/>
<dbReference type="PhylomeDB" id="Q54TL8"/>
<dbReference type="Reactome" id="R-DDI-156827">
    <property type="pathway name" value="L13a-mediated translational silencing of Ceruloplasmin expression"/>
</dbReference>
<dbReference type="Reactome" id="R-DDI-1799339">
    <property type="pathway name" value="SRP-dependent cotranslational protein targeting to membrane"/>
</dbReference>
<dbReference type="Reactome" id="R-DDI-72689">
    <property type="pathway name" value="Formation of a pool of free 40S subunits"/>
</dbReference>
<dbReference type="Reactome" id="R-DDI-72695">
    <property type="pathway name" value="Formation of the ternary complex, and subsequently, the 43S complex"/>
</dbReference>
<dbReference type="Reactome" id="R-DDI-72702">
    <property type="pathway name" value="Ribosomal scanning and start codon recognition"/>
</dbReference>
<dbReference type="Reactome" id="R-DDI-72706">
    <property type="pathway name" value="GTP hydrolysis and joining of the 60S ribosomal subunit"/>
</dbReference>
<dbReference type="Reactome" id="R-DDI-975956">
    <property type="pathway name" value="Nonsense Mediated Decay (NMD) independent of the Exon Junction Complex (EJC)"/>
</dbReference>
<dbReference type="Reactome" id="R-DDI-975957">
    <property type="pathway name" value="Nonsense Mediated Decay (NMD) enhanced by the Exon Junction Complex (EJC)"/>
</dbReference>
<dbReference type="PRO" id="PR:Q54TL8"/>
<dbReference type="Proteomes" id="UP000002195">
    <property type="component" value="Chromosome 3"/>
</dbReference>
<dbReference type="GO" id="GO:0022627">
    <property type="term" value="C:cytosolic small ribosomal subunit"/>
    <property type="evidence" value="ECO:0000318"/>
    <property type="project" value="GO_Central"/>
</dbReference>
<dbReference type="GO" id="GO:0031012">
    <property type="term" value="C:extracellular matrix"/>
    <property type="evidence" value="ECO:0007005"/>
    <property type="project" value="dictyBase"/>
</dbReference>
<dbReference type="GO" id="GO:0003729">
    <property type="term" value="F:mRNA binding"/>
    <property type="evidence" value="ECO:0000318"/>
    <property type="project" value="GO_Central"/>
</dbReference>
<dbReference type="GO" id="GO:0003735">
    <property type="term" value="F:structural constituent of ribosome"/>
    <property type="evidence" value="ECO:0000318"/>
    <property type="project" value="GO_Central"/>
</dbReference>
<dbReference type="GO" id="GO:0006412">
    <property type="term" value="P:translation"/>
    <property type="evidence" value="ECO:0007669"/>
    <property type="project" value="InterPro"/>
</dbReference>
<dbReference type="FunFam" id="3.30.1740.20:FF:000001">
    <property type="entry name" value="40S ribosomal protein S26"/>
    <property type="match status" value="1"/>
</dbReference>
<dbReference type="Gene3D" id="3.30.1740.20">
    <property type="entry name" value="Ribosomal protein S26e"/>
    <property type="match status" value="1"/>
</dbReference>
<dbReference type="InterPro" id="IPR000892">
    <property type="entry name" value="Ribosomal_eS26"/>
</dbReference>
<dbReference type="InterPro" id="IPR047864">
    <property type="entry name" value="Ribosomal_eS26_CS"/>
</dbReference>
<dbReference type="InterPro" id="IPR038551">
    <property type="entry name" value="Ribosomal_eS26_sf"/>
</dbReference>
<dbReference type="PANTHER" id="PTHR12538">
    <property type="entry name" value="40S RIBOSOMAL PROTEIN S26"/>
    <property type="match status" value="1"/>
</dbReference>
<dbReference type="PANTHER" id="PTHR12538:SF0">
    <property type="entry name" value="40S RIBOSOMAL PROTEIN S26"/>
    <property type="match status" value="1"/>
</dbReference>
<dbReference type="Pfam" id="PF01283">
    <property type="entry name" value="Ribosomal_S26e"/>
    <property type="match status" value="1"/>
</dbReference>
<dbReference type="PROSITE" id="PS00733">
    <property type="entry name" value="RIBOSOMAL_S26E"/>
    <property type="match status" value="1"/>
</dbReference>
<evidence type="ECO:0000256" key="1">
    <source>
        <dbReference type="SAM" id="MobiDB-lite"/>
    </source>
</evidence>
<evidence type="ECO:0000305" key="2"/>
<gene>
    <name type="primary">rps26</name>
    <name type="ORF">DDB_G0281677</name>
</gene>
<accession>Q54TL8</accession>
<organism>
    <name type="scientific">Dictyostelium discoideum</name>
    <name type="common">Social amoeba</name>
    <dbReference type="NCBI Taxonomy" id="44689"/>
    <lineage>
        <taxon>Eukaryota</taxon>
        <taxon>Amoebozoa</taxon>
        <taxon>Evosea</taxon>
        <taxon>Eumycetozoa</taxon>
        <taxon>Dictyostelia</taxon>
        <taxon>Dictyosteliales</taxon>
        <taxon>Dictyosteliaceae</taxon>
        <taxon>Dictyostelium</taxon>
    </lineage>
</organism>